<evidence type="ECO:0000255" key="1">
    <source>
        <dbReference type="HAMAP-Rule" id="MF_01411"/>
    </source>
</evidence>
<name>LPTD_SACD2</name>
<accession>Q21MS7</accession>
<sequence>MTKRYFSLLAVCSAIATSTFADDTPTNSLSLGKTYLRCYPQADSNQWDCAEYSSETNLPIGRSQIQQAPNAYDFVSAENLTPAAQSALLPGCTGMYIDPLGDQTNAPSPENTPLIVEADDSVLTGSQKAQLDGNVQISQGARSIRADSMTYSRETEEASLAGGVTIRNPGLLIRGDKASMSTTRNQASFENAIFVLHGQHIRGQADAIRQTSDSSIVLEGGSITSCEPGSNAWSLGGAEIKIDNEKGQGTGKHITLKVGKVPIMYVPYIAFPLGDQRQSGLLFPSISSSDNGGLDAAVPFYWNMAPNYDATITPRIISGRGAMLEVEGRHLNKSFYTESNIAYLPNDDGGQDKDLDTLVSNGDITESQAHPYTGQNRWLGHLSQQGGSASNGGWYSTIDFTKVSDQDYFRDLGASSFSEQNQSYLDQRAELGYLFEHWTVSAMAQNRQVLLYDLDTPYRRAPQLNAIGHYSVNGFEFKLDNELVRFDHPSNEWRNGDTLITGSRLSTDYRAAWPIRGRWGFIKPEVGYKALGYQLESDGLASSAESSPTLGAAQASIDMSVIFEHRGGSIMQTIEPRVYYLHRAYTDHSDLYAVTADGQNVNFDTSIRTFSYSQLFRDSRFGGRDRLDDANQTTVGLTSRWYSNNSGRELFSASIGQVFHNADRRVGLNGEELNTGQTSELAADVSVMLGPLSRFYVNSIYDTEAAEITRASSGVYYHSQDLSTLANLSYSYVRDYRQSSIAAGTTEATDIDQVDLSFVTPINKQWSLMGRYNYDFTQAQELETFLGFEYNDCCYRVRLLARKWLDSNIASLTDNHDLEHDQGVFFEVHFKGLGGSGAKVNSILEDSIRGYQERERRNKQ</sequence>
<gene>
    <name evidence="1" type="primary">lptD</name>
    <name type="synonym">imp</name>
    <name type="synonym">ostA</name>
    <name type="ordered locus">Sde_0740</name>
</gene>
<proteinExistence type="inferred from homology"/>
<protein>
    <recommendedName>
        <fullName evidence="1">LPS-assembly protein LptD</fullName>
    </recommendedName>
</protein>
<dbReference type="EMBL" id="CP000282">
    <property type="protein sequence ID" value="ABD80002.1"/>
    <property type="molecule type" value="Genomic_DNA"/>
</dbReference>
<dbReference type="RefSeq" id="WP_011467223.1">
    <property type="nucleotide sequence ID" value="NC_007912.1"/>
</dbReference>
<dbReference type="SMR" id="Q21MS7"/>
<dbReference type="STRING" id="203122.Sde_0740"/>
<dbReference type="GeneID" id="98612425"/>
<dbReference type="KEGG" id="sde:Sde_0740"/>
<dbReference type="eggNOG" id="COG1452">
    <property type="taxonomic scope" value="Bacteria"/>
</dbReference>
<dbReference type="HOGENOM" id="CLU_009039_0_0_6"/>
<dbReference type="OrthoDB" id="9760225at2"/>
<dbReference type="Proteomes" id="UP000001947">
    <property type="component" value="Chromosome"/>
</dbReference>
<dbReference type="GO" id="GO:0009279">
    <property type="term" value="C:cell outer membrane"/>
    <property type="evidence" value="ECO:0007669"/>
    <property type="project" value="UniProtKB-SubCell"/>
</dbReference>
<dbReference type="GO" id="GO:1990351">
    <property type="term" value="C:transporter complex"/>
    <property type="evidence" value="ECO:0007669"/>
    <property type="project" value="TreeGrafter"/>
</dbReference>
<dbReference type="GO" id="GO:0043165">
    <property type="term" value="P:Gram-negative-bacterium-type cell outer membrane assembly"/>
    <property type="evidence" value="ECO:0007669"/>
    <property type="project" value="UniProtKB-UniRule"/>
</dbReference>
<dbReference type="GO" id="GO:0015920">
    <property type="term" value="P:lipopolysaccharide transport"/>
    <property type="evidence" value="ECO:0007669"/>
    <property type="project" value="InterPro"/>
</dbReference>
<dbReference type="Gene3D" id="2.60.450.10">
    <property type="entry name" value="Lipopolysaccharide (LPS) transport protein A like domain"/>
    <property type="match status" value="1"/>
</dbReference>
<dbReference type="HAMAP" id="MF_01411">
    <property type="entry name" value="LPS_assembly_LptD"/>
    <property type="match status" value="1"/>
</dbReference>
<dbReference type="InterPro" id="IPR020889">
    <property type="entry name" value="LipoPS_assembly_LptD"/>
</dbReference>
<dbReference type="InterPro" id="IPR050218">
    <property type="entry name" value="LptD"/>
</dbReference>
<dbReference type="InterPro" id="IPR007543">
    <property type="entry name" value="LptD_C"/>
</dbReference>
<dbReference type="InterPro" id="IPR005653">
    <property type="entry name" value="OstA-like_N"/>
</dbReference>
<dbReference type="PANTHER" id="PTHR30189">
    <property type="entry name" value="LPS-ASSEMBLY PROTEIN"/>
    <property type="match status" value="1"/>
</dbReference>
<dbReference type="PANTHER" id="PTHR30189:SF1">
    <property type="entry name" value="LPS-ASSEMBLY PROTEIN LPTD"/>
    <property type="match status" value="1"/>
</dbReference>
<dbReference type="Pfam" id="PF04453">
    <property type="entry name" value="LptD"/>
    <property type="match status" value="1"/>
</dbReference>
<dbReference type="Pfam" id="PF03968">
    <property type="entry name" value="LptD_N"/>
    <property type="match status" value="1"/>
</dbReference>
<feature type="signal peptide" evidence="1">
    <location>
        <begin position="1"/>
        <end position="21"/>
    </location>
</feature>
<feature type="chain" id="PRO_5000111110" description="LPS-assembly protein LptD">
    <location>
        <begin position="22"/>
        <end position="860"/>
    </location>
</feature>
<comment type="function">
    <text evidence="1">Together with LptE, is involved in the assembly of lipopolysaccharide (LPS) at the surface of the outer membrane.</text>
</comment>
<comment type="subunit">
    <text evidence="1">Component of the lipopolysaccharide transport and assembly complex. Interacts with LptE and LptA.</text>
</comment>
<comment type="subcellular location">
    <subcellularLocation>
        <location evidence="1">Cell outer membrane</location>
    </subcellularLocation>
</comment>
<comment type="similarity">
    <text evidence="1">Belongs to the LptD family.</text>
</comment>
<organism>
    <name type="scientific">Saccharophagus degradans (strain 2-40 / ATCC 43961 / DSM 17024)</name>
    <dbReference type="NCBI Taxonomy" id="203122"/>
    <lineage>
        <taxon>Bacteria</taxon>
        <taxon>Pseudomonadati</taxon>
        <taxon>Pseudomonadota</taxon>
        <taxon>Gammaproteobacteria</taxon>
        <taxon>Cellvibrionales</taxon>
        <taxon>Cellvibrionaceae</taxon>
        <taxon>Saccharophagus</taxon>
    </lineage>
</organism>
<reference key="1">
    <citation type="journal article" date="2008" name="PLoS Genet.">
        <title>Complete genome sequence of the complex carbohydrate-degrading marine bacterium, Saccharophagus degradans strain 2-40 T.</title>
        <authorList>
            <person name="Weiner R.M."/>
            <person name="Taylor L.E. II"/>
            <person name="Henrissat B."/>
            <person name="Hauser L."/>
            <person name="Land M."/>
            <person name="Coutinho P.M."/>
            <person name="Rancurel C."/>
            <person name="Saunders E.H."/>
            <person name="Longmire A.G."/>
            <person name="Zhang H."/>
            <person name="Bayer E.A."/>
            <person name="Gilbert H.J."/>
            <person name="Larimer F."/>
            <person name="Zhulin I.B."/>
            <person name="Ekborg N.A."/>
            <person name="Lamed R."/>
            <person name="Richardson P.M."/>
            <person name="Borovok I."/>
            <person name="Hutcheson S."/>
        </authorList>
    </citation>
    <scope>NUCLEOTIDE SEQUENCE [LARGE SCALE GENOMIC DNA]</scope>
    <source>
        <strain>2-40 / ATCC 43961 / DSM 17024</strain>
    </source>
</reference>
<keyword id="KW-0998">Cell outer membrane</keyword>
<keyword id="KW-0472">Membrane</keyword>
<keyword id="KW-1185">Reference proteome</keyword>
<keyword id="KW-0732">Signal</keyword>